<name>Y946_YERPS</name>
<comment type="function">
    <text evidence="1">Nucleotide-binding protein.</text>
</comment>
<comment type="similarity">
    <text evidence="1">Belongs to the YajQ family.</text>
</comment>
<accession>Q66DU7</accession>
<protein>
    <recommendedName>
        <fullName evidence="1">Nucleotide-binding protein YPTB0946</fullName>
    </recommendedName>
</protein>
<keyword id="KW-0547">Nucleotide-binding</keyword>
<dbReference type="EMBL" id="BX936398">
    <property type="protein sequence ID" value="CAH20186.1"/>
    <property type="molecule type" value="Genomic_DNA"/>
</dbReference>
<dbReference type="RefSeq" id="WP_002208655.1">
    <property type="nucleotide sequence ID" value="NZ_CP009712.1"/>
</dbReference>
<dbReference type="SMR" id="Q66DU7"/>
<dbReference type="KEGG" id="ypo:BZ17_1601"/>
<dbReference type="KEGG" id="yps:YPTB0946"/>
<dbReference type="PATRIC" id="fig|273123.14.peg.1698"/>
<dbReference type="Proteomes" id="UP000001011">
    <property type="component" value="Chromosome"/>
</dbReference>
<dbReference type="GO" id="GO:0005829">
    <property type="term" value="C:cytosol"/>
    <property type="evidence" value="ECO:0007669"/>
    <property type="project" value="TreeGrafter"/>
</dbReference>
<dbReference type="GO" id="GO:0000166">
    <property type="term" value="F:nucleotide binding"/>
    <property type="evidence" value="ECO:0007669"/>
    <property type="project" value="TreeGrafter"/>
</dbReference>
<dbReference type="CDD" id="cd11740">
    <property type="entry name" value="YajQ_like"/>
    <property type="match status" value="1"/>
</dbReference>
<dbReference type="FunFam" id="3.30.70.860:FF:000001">
    <property type="entry name" value="UPF0234 protein YajQ"/>
    <property type="match status" value="1"/>
</dbReference>
<dbReference type="FunFam" id="3.30.70.990:FF:000001">
    <property type="entry name" value="UPF0234 protein YajQ"/>
    <property type="match status" value="1"/>
</dbReference>
<dbReference type="Gene3D" id="3.30.70.860">
    <property type="match status" value="1"/>
</dbReference>
<dbReference type="Gene3D" id="3.30.70.990">
    <property type="entry name" value="YajQ-like, domain 2"/>
    <property type="match status" value="1"/>
</dbReference>
<dbReference type="HAMAP" id="MF_00632">
    <property type="entry name" value="YajQ"/>
    <property type="match status" value="1"/>
</dbReference>
<dbReference type="InterPro" id="IPR007551">
    <property type="entry name" value="DUF520"/>
</dbReference>
<dbReference type="InterPro" id="IPR035571">
    <property type="entry name" value="UPF0234-like_C"/>
</dbReference>
<dbReference type="InterPro" id="IPR035570">
    <property type="entry name" value="UPF0234_N"/>
</dbReference>
<dbReference type="InterPro" id="IPR036183">
    <property type="entry name" value="YajQ-like_sf"/>
</dbReference>
<dbReference type="NCBIfam" id="NF003819">
    <property type="entry name" value="PRK05412.1"/>
    <property type="match status" value="1"/>
</dbReference>
<dbReference type="PANTHER" id="PTHR30476">
    <property type="entry name" value="UPF0234 PROTEIN YAJQ"/>
    <property type="match status" value="1"/>
</dbReference>
<dbReference type="PANTHER" id="PTHR30476:SF0">
    <property type="entry name" value="UPF0234 PROTEIN YAJQ"/>
    <property type="match status" value="1"/>
</dbReference>
<dbReference type="Pfam" id="PF04461">
    <property type="entry name" value="DUF520"/>
    <property type="match status" value="1"/>
</dbReference>
<dbReference type="SUPFAM" id="SSF89963">
    <property type="entry name" value="YajQ-like"/>
    <property type="match status" value="2"/>
</dbReference>
<evidence type="ECO:0000255" key="1">
    <source>
        <dbReference type="HAMAP-Rule" id="MF_00632"/>
    </source>
</evidence>
<proteinExistence type="inferred from homology"/>
<feature type="chain" id="PRO_0000261993" description="Nucleotide-binding protein YPTB0946">
    <location>
        <begin position="1"/>
        <end position="163"/>
    </location>
</feature>
<gene>
    <name type="ordered locus">YPTB0946</name>
</gene>
<sequence>MPSFDIVSEIDMQEVRNAVENATRDLANRWDFRNVPASFELNEKNESIKVVSESDFQVEQLLDILRAQLSKRGIEGAALEIPEEMARSGKTYSVDAKLKQGIESVQAKKLVKLIKDSKLKVQAQIQGEQVRVTGKARDDLQAVMALVRAADLGQPFQFNNFRD</sequence>
<reference key="1">
    <citation type="journal article" date="2004" name="Proc. Natl. Acad. Sci. U.S.A.">
        <title>Insights into the evolution of Yersinia pestis through whole-genome comparison with Yersinia pseudotuberculosis.</title>
        <authorList>
            <person name="Chain P.S.G."/>
            <person name="Carniel E."/>
            <person name="Larimer F.W."/>
            <person name="Lamerdin J."/>
            <person name="Stoutland P.O."/>
            <person name="Regala W.M."/>
            <person name="Georgescu A.M."/>
            <person name="Vergez L.M."/>
            <person name="Land M.L."/>
            <person name="Motin V.L."/>
            <person name="Brubaker R.R."/>
            <person name="Fowler J."/>
            <person name="Hinnebusch J."/>
            <person name="Marceau M."/>
            <person name="Medigue C."/>
            <person name="Simonet M."/>
            <person name="Chenal-Francisque V."/>
            <person name="Souza B."/>
            <person name="Dacheux D."/>
            <person name="Elliott J.M."/>
            <person name="Derbise A."/>
            <person name="Hauser L.J."/>
            <person name="Garcia E."/>
        </authorList>
    </citation>
    <scope>NUCLEOTIDE SEQUENCE [LARGE SCALE GENOMIC DNA]</scope>
    <source>
        <strain>IP32953</strain>
    </source>
</reference>
<organism>
    <name type="scientific">Yersinia pseudotuberculosis serotype I (strain IP32953)</name>
    <dbReference type="NCBI Taxonomy" id="273123"/>
    <lineage>
        <taxon>Bacteria</taxon>
        <taxon>Pseudomonadati</taxon>
        <taxon>Pseudomonadota</taxon>
        <taxon>Gammaproteobacteria</taxon>
        <taxon>Enterobacterales</taxon>
        <taxon>Yersiniaceae</taxon>
        <taxon>Yersinia</taxon>
    </lineage>
</organism>